<evidence type="ECO:0000250" key="1"/>
<evidence type="ECO:0000305" key="2"/>
<comment type="function">
    <text>Destroys superoxide anion radicals which are normally produced within the cells and which are toxic to biological systems.</text>
</comment>
<comment type="catalytic activity">
    <reaction>
        <text>2 superoxide + 2 H(+) = H2O2 + O2</text>
        <dbReference type="Rhea" id="RHEA:20696"/>
        <dbReference type="ChEBI" id="CHEBI:15378"/>
        <dbReference type="ChEBI" id="CHEBI:15379"/>
        <dbReference type="ChEBI" id="CHEBI:16240"/>
        <dbReference type="ChEBI" id="CHEBI:18421"/>
        <dbReference type="EC" id="1.15.1.1"/>
    </reaction>
</comment>
<comment type="cofactor">
    <cofactor evidence="1">
        <name>Mn(2+)</name>
        <dbReference type="ChEBI" id="CHEBI:29035"/>
    </cofactor>
    <text evidence="1">Binds 1 Mn(2+) ion per subunit.</text>
</comment>
<comment type="subunit">
    <text>Homotetramer.</text>
</comment>
<comment type="subcellular location">
    <subcellularLocation>
        <location>Mitochondrion matrix</location>
    </subcellularLocation>
</comment>
<comment type="similarity">
    <text evidence="2">Belongs to the iron/manganese superoxide dismutase family.</text>
</comment>
<organism>
    <name type="scientific">Branchiostoma floridae</name>
    <name type="common">Florida lancelet</name>
    <name type="synonym">Amphioxus</name>
    <dbReference type="NCBI Taxonomy" id="7739"/>
    <lineage>
        <taxon>Eukaryota</taxon>
        <taxon>Metazoa</taxon>
        <taxon>Chordata</taxon>
        <taxon>Cephalochordata</taxon>
        <taxon>Leptocardii</taxon>
        <taxon>Amphioxiformes</taxon>
        <taxon>Branchiostomatidae</taxon>
        <taxon>Branchiostoma</taxon>
    </lineage>
</organism>
<proteinExistence type="evidence at transcript level"/>
<name>SODM_BRAFL</name>
<accession>P28761</accession>
<dbReference type="EC" id="1.15.1.1"/>
<dbReference type="EMBL" id="X64061">
    <property type="protein sequence ID" value="CAA45417.1"/>
    <property type="molecule type" value="mRNA"/>
</dbReference>
<dbReference type="PIR" id="S23658">
    <property type="entry name" value="S23658"/>
</dbReference>
<dbReference type="SMR" id="P28761"/>
<dbReference type="Proteomes" id="UP000001554">
    <property type="component" value="Unplaced"/>
</dbReference>
<dbReference type="GO" id="GO:0005759">
    <property type="term" value="C:mitochondrial matrix"/>
    <property type="evidence" value="ECO:0007669"/>
    <property type="project" value="UniProtKB-SubCell"/>
</dbReference>
<dbReference type="GO" id="GO:0005739">
    <property type="term" value="C:mitochondrion"/>
    <property type="evidence" value="ECO:0000318"/>
    <property type="project" value="GO_Central"/>
</dbReference>
<dbReference type="GO" id="GO:0030145">
    <property type="term" value="F:manganese ion binding"/>
    <property type="evidence" value="ECO:0000318"/>
    <property type="project" value="GO_Central"/>
</dbReference>
<dbReference type="GO" id="GO:0004784">
    <property type="term" value="F:superoxide dismutase activity"/>
    <property type="evidence" value="ECO:0000318"/>
    <property type="project" value="GO_Central"/>
</dbReference>
<dbReference type="FunFam" id="1.10.287.990:FF:000001">
    <property type="entry name" value="Superoxide dismutase"/>
    <property type="match status" value="1"/>
</dbReference>
<dbReference type="Gene3D" id="1.10.287.990">
    <property type="entry name" value="Fe,Mn superoxide dismutase (SOD) domain"/>
    <property type="match status" value="1"/>
</dbReference>
<dbReference type="Gene3D" id="3.55.40.20">
    <property type="entry name" value="Iron/manganese superoxide dismutase, C-terminal domain"/>
    <property type="match status" value="1"/>
</dbReference>
<dbReference type="InterPro" id="IPR050265">
    <property type="entry name" value="Fe/Mn_Superoxide_Dismutase"/>
</dbReference>
<dbReference type="InterPro" id="IPR001189">
    <property type="entry name" value="Mn/Fe_SOD"/>
</dbReference>
<dbReference type="InterPro" id="IPR019832">
    <property type="entry name" value="Mn/Fe_SOD_C"/>
</dbReference>
<dbReference type="InterPro" id="IPR019831">
    <property type="entry name" value="Mn/Fe_SOD_N"/>
</dbReference>
<dbReference type="InterPro" id="IPR036324">
    <property type="entry name" value="Mn/Fe_SOD_N_sf"/>
</dbReference>
<dbReference type="InterPro" id="IPR036314">
    <property type="entry name" value="SOD_C_sf"/>
</dbReference>
<dbReference type="PANTHER" id="PTHR11404">
    <property type="entry name" value="SUPEROXIDE DISMUTASE 2"/>
    <property type="match status" value="1"/>
</dbReference>
<dbReference type="PANTHER" id="PTHR11404:SF6">
    <property type="entry name" value="SUPEROXIDE DISMUTASE [MN], MITOCHONDRIAL"/>
    <property type="match status" value="1"/>
</dbReference>
<dbReference type="Pfam" id="PF02777">
    <property type="entry name" value="Sod_Fe_C"/>
    <property type="match status" value="1"/>
</dbReference>
<dbReference type="Pfam" id="PF00081">
    <property type="entry name" value="Sod_Fe_N"/>
    <property type="match status" value="1"/>
</dbReference>
<dbReference type="PRINTS" id="PR01703">
    <property type="entry name" value="MNSODISMTASE"/>
</dbReference>
<dbReference type="SUPFAM" id="SSF54719">
    <property type="entry name" value="Fe,Mn superoxide dismutase (SOD), C-terminal domain"/>
    <property type="match status" value="1"/>
</dbReference>
<dbReference type="SUPFAM" id="SSF46609">
    <property type="entry name" value="Fe,Mn superoxide dismutase (SOD), N-terminal domain"/>
    <property type="match status" value="1"/>
</dbReference>
<sequence length="144" mass="15453">VISAEIMQVHHQKHHATYVNNLNAAEEQLAEAIHKQDVTKMIALQSAIKFNGGGHINHSIFWNNLCPSGGGEPTGPLAEAITRDFGSFEAFKEKMTAATVAVQGSGWGWLGLDPTSKKLRIVACPNQDPLEGTTGLKPLLGIDV</sequence>
<keyword id="KW-0464">Manganese</keyword>
<keyword id="KW-0479">Metal-binding</keyword>
<keyword id="KW-0496">Mitochondrion</keyword>
<keyword id="KW-0560">Oxidoreductase</keyword>
<keyword id="KW-1185">Reference proteome</keyword>
<reference key="1">
    <citation type="journal article" date="1992" name="J. Mol. Evol.">
        <title>A comparison of evolutionary rates of the two major kinds of superoxide dismutase.</title>
        <authorList>
            <person name="Smith M.W."/>
            <person name="Doolittle R.F."/>
        </authorList>
    </citation>
    <scope>NUCLEOTIDE SEQUENCE [MRNA]</scope>
</reference>
<feature type="chain" id="PRO_0000159958" description="Superoxide dismutase [Mn], mitochondrial">
    <location>
        <begin position="1" status="less than"/>
        <end position="144" status="greater than"/>
    </location>
</feature>
<feature type="binding site" evidence="1">
    <location>
        <position position="10"/>
    </location>
    <ligand>
        <name>Mn(2+)</name>
        <dbReference type="ChEBI" id="CHEBI:29035"/>
    </ligand>
</feature>
<feature type="binding site" evidence="1">
    <location>
        <position position="58"/>
    </location>
    <ligand>
        <name>Mn(2+)</name>
        <dbReference type="ChEBI" id="CHEBI:29035"/>
    </ligand>
</feature>
<feature type="binding site" evidence="1">
    <location>
        <position position="143"/>
    </location>
    <ligand>
        <name>Mn(2+)</name>
        <dbReference type="ChEBI" id="CHEBI:29035"/>
    </ligand>
</feature>
<feature type="non-terminal residue">
    <location>
        <position position="1"/>
    </location>
</feature>
<feature type="non-terminal residue">
    <location>
        <position position="144"/>
    </location>
</feature>
<protein>
    <recommendedName>
        <fullName>Superoxide dismutase [Mn], mitochondrial</fullName>
        <ecNumber>1.15.1.1</ecNumber>
    </recommendedName>
</protein>